<reference key="1">
    <citation type="journal article" date="2002" name="J. Bacteriol.">
        <title>Whole-genome comparison of Mycobacterium tuberculosis clinical and laboratory strains.</title>
        <authorList>
            <person name="Fleischmann R.D."/>
            <person name="Alland D."/>
            <person name="Eisen J.A."/>
            <person name="Carpenter L."/>
            <person name="White O."/>
            <person name="Peterson J.D."/>
            <person name="DeBoy R.T."/>
            <person name="Dodson R.J."/>
            <person name="Gwinn M.L."/>
            <person name="Haft D.H."/>
            <person name="Hickey E.K."/>
            <person name="Kolonay J.F."/>
            <person name="Nelson W.C."/>
            <person name="Umayam L.A."/>
            <person name="Ermolaeva M.D."/>
            <person name="Salzberg S.L."/>
            <person name="Delcher A."/>
            <person name="Utterback T.R."/>
            <person name="Weidman J.F."/>
            <person name="Khouri H.M."/>
            <person name="Gill J."/>
            <person name="Mikula A."/>
            <person name="Bishai W."/>
            <person name="Jacobs W.R. Jr."/>
            <person name="Venter J.C."/>
            <person name="Fraser C.M."/>
        </authorList>
    </citation>
    <scope>NUCLEOTIDE SEQUENCE [LARGE SCALE GENOMIC DNA]</scope>
    <source>
        <strain>CDC 1551 / Oshkosh</strain>
    </source>
</reference>
<accession>P9WHE2</accession>
<accession>L0T4C2</accession>
<accession>P0A5V2</accession>
<accession>P37381</accession>
<name>RL7_MYCTO</name>
<protein>
    <recommendedName>
        <fullName evidence="1">Large ribosomal subunit protein bL12</fullName>
    </recommendedName>
    <alternativeName>
        <fullName evidence="2">50S ribosomal protein L7/L12</fullName>
    </alternativeName>
</protein>
<feature type="chain" id="PRO_0000428202" description="Large ribosomal subunit protein bL12">
    <location>
        <begin position="1"/>
        <end position="130"/>
    </location>
</feature>
<proteinExistence type="inferred from homology"/>
<sequence>MAKLSTDELLDAFKEMTLLELSDFVKKFEETFEVTAAAPVAVAAAGAAPAGAAVEAAEEQSEFDVILEAAGDKKIGVIKVVREIVSGLGLKEAKDLVDGAPKPLLEKVAKEAADEAKAKLEAAGATVTVK</sequence>
<dbReference type="EMBL" id="AE000516">
    <property type="protein sequence ID" value="AAK44906.1"/>
    <property type="molecule type" value="Genomic_DNA"/>
</dbReference>
<dbReference type="PIR" id="A70615">
    <property type="entry name" value="A70615"/>
</dbReference>
<dbReference type="RefSeq" id="WP_003403353.1">
    <property type="nucleotide sequence ID" value="NZ_KK341227.1"/>
</dbReference>
<dbReference type="SMR" id="P9WHE2"/>
<dbReference type="GeneID" id="45424612"/>
<dbReference type="KEGG" id="mtc:MT0681"/>
<dbReference type="PATRIC" id="fig|83331.31.peg.724"/>
<dbReference type="HOGENOM" id="CLU_086499_3_0_11"/>
<dbReference type="Proteomes" id="UP000001020">
    <property type="component" value="Chromosome"/>
</dbReference>
<dbReference type="GO" id="GO:0022625">
    <property type="term" value="C:cytosolic large ribosomal subunit"/>
    <property type="evidence" value="ECO:0007669"/>
    <property type="project" value="TreeGrafter"/>
</dbReference>
<dbReference type="GO" id="GO:0003729">
    <property type="term" value="F:mRNA binding"/>
    <property type="evidence" value="ECO:0007669"/>
    <property type="project" value="TreeGrafter"/>
</dbReference>
<dbReference type="GO" id="GO:0003735">
    <property type="term" value="F:structural constituent of ribosome"/>
    <property type="evidence" value="ECO:0007669"/>
    <property type="project" value="InterPro"/>
</dbReference>
<dbReference type="GO" id="GO:0006412">
    <property type="term" value="P:translation"/>
    <property type="evidence" value="ECO:0007669"/>
    <property type="project" value="UniProtKB-UniRule"/>
</dbReference>
<dbReference type="CDD" id="cd00387">
    <property type="entry name" value="Ribosomal_L7_L12"/>
    <property type="match status" value="1"/>
</dbReference>
<dbReference type="FunFam" id="1.20.5.710:FF:000005">
    <property type="entry name" value="50S ribosomal protein L7/L12"/>
    <property type="match status" value="1"/>
</dbReference>
<dbReference type="FunFam" id="3.30.1390.10:FF:000001">
    <property type="entry name" value="50S ribosomal protein L7/L12"/>
    <property type="match status" value="1"/>
</dbReference>
<dbReference type="Gene3D" id="3.30.1390.10">
    <property type="match status" value="1"/>
</dbReference>
<dbReference type="Gene3D" id="1.20.5.710">
    <property type="entry name" value="Single helix bin"/>
    <property type="match status" value="1"/>
</dbReference>
<dbReference type="HAMAP" id="MF_00368">
    <property type="entry name" value="Ribosomal_bL12"/>
    <property type="match status" value="1"/>
</dbReference>
<dbReference type="InterPro" id="IPR000206">
    <property type="entry name" value="Ribosomal_bL12"/>
</dbReference>
<dbReference type="InterPro" id="IPR013823">
    <property type="entry name" value="Ribosomal_bL12_C"/>
</dbReference>
<dbReference type="InterPro" id="IPR014719">
    <property type="entry name" value="Ribosomal_bL12_C/ClpS-like"/>
</dbReference>
<dbReference type="InterPro" id="IPR008932">
    <property type="entry name" value="Ribosomal_bL12_oligo"/>
</dbReference>
<dbReference type="InterPro" id="IPR036235">
    <property type="entry name" value="Ribosomal_bL12_oligo_N_sf"/>
</dbReference>
<dbReference type="NCBIfam" id="TIGR00855">
    <property type="entry name" value="L12"/>
    <property type="match status" value="1"/>
</dbReference>
<dbReference type="PANTHER" id="PTHR45987">
    <property type="entry name" value="39S RIBOSOMAL PROTEIN L12"/>
    <property type="match status" value="1"/>
</dbReference>
<dbReference type="PANTHER" id="PTHR45987:SF4">
    <property type="entry name" value="LARGE RIBOSOMAL SUBUNIT PROTEIN BL12M"/>
    <property type="match status" value="1"/>
</dbReference>
<dbReference type="Pfam" id="PF00542">
    <property type="entry name" value="Ribosomal_L12"/>
    <property type="match status" value="1"/>
</dbReference>
<dbReference type="Pfam" id="PF16320">
    <property type="entry name" value="Ribosomal_L12_N"/>
    <property type="match status" value="1"/>
</dbReference>
<dbReference type="SUPFAM" id="SSF54736">
    <property type="entry name" value="ClpS-like"/>
    <property type="match status" value="1"/>
</dbReference>
<dbReference type="SUPFAM" id="SSF48300">
    <property type="entry name" value="Ribosomal protein L7/12, oligomerisation (N-terminal) domain"/>
    <property type="match status" value="1"/>
</dbReference>
<keyword id="KW-1185">Reference proteome</keyword>
<keyword id="KW-0687">Ribonucleoprotein</keyword>
<keyword id="KW-0689">Ribosomal protein</keyword>
<organism>
    <name type="scientific">Mycobacterium tuberculosis (strain CDC 1551 / Oshkosh)</name>
    <dbReference type="NCBI Taxonomy" id="83331"/>
    <lineage>
        <taxon>Bacteria</taxon>
        <taxon>Bacillati</taxon>
        <taxon>Actinomycetota</taxon>
        <taxon>Actinomycetes</taxon>
        <taxon>Mycobacteriales</taxon>
        <taxon>Mycobacteriaceae</taxon>
        <taxon>Mycobacterium</taxon>
        <taxon>Mycobacterium tuberculosis complex</taxon>
    </lineage>
</organism>
<evidence type="ECO:0000255" key="1">
    <source>
        <dbReference type="HAMAP-Rule" id="MF_00368"/>
    </source>
</evidence>
<evidence type="ECO:0000305" key="2"/>
<comment type="function">
    <text evidence="1">Forms part of the ribosomal stalk which helps the ribosome interact with GTP-bound translation factors. Is thus essential for accurate translation.</text>
</comment>
<comment type="subunit">
    <text evidence="1">Homodimer. Part of the ribosomal stalk of the 50S ribosomal subunit. Forms a multimeric L10(L12)X complex, where L10 forms an elongated spine to which 2 to 4 L12 dimers bind in a sequential fashion. Binds GTP-bound translation factors.</text>
</comment>
<comment type="similarity">
    <text evidence="1">Belongs to the bacterial ribosomal protein bL12 family.</text>
</comment>
<gene>
    <name evidence="1" type="primary">rplL</name>
    <name type="ordered locus">MT0681</name>
</gene>